<evidence type="ECO:0000255" key="1">
    <source>
        <dbReference type="HAMAP-Rule" id="MF_00281"/>
    </source>
</evidence>
<reference key="1">
    <citation type="journal article" date="2004" name="Nature">
        <title>Genome sequence of Silicibacter pomeroyi reveals adaptations to the marine environment.</title>
        <authorList>
            <person name="Moran M.A."/>
            <person name="Buchan A."/>
            <person name="Gonzalez J.M."/>
            <person name="Heidelberg J.F."/>
            <person name="Whitman W.B."/>
            <person name="Kiene R.P."/>
            <person name="Henriksen J.R."/>
            <person name="King G.M."/>
            <person name="Belas R."/>
            <person name="Fuqua C."/>
            <person name="Brinkac L.M."/>
            <person name="Lewis M."/>
            <person name="Johri S."/>
            <person name="Weaver B."/>
            <person name="Pai G."/>
            <person name="Eisen J.A."/>
            <person name="Rahe E."/>
            <person name="Sheldon W.M."/>
            <person name="Ye W."/>
            <person name="Miller T.R."/>
            <person name="Carlton J."/>
            <person name="Rasko D.A."/>
            <person name="Paulsen I.T."/>
            <person name="Ren Q."/>
            <person name="Daugherty S.C."/>
            <person name="DeBoy R.T."/>
            <person name="Dodson R.J."/>
            <person name="Durkin A.S."/>
            <person name="Madupu R."/>
            <person name="Nelson W.C."/>
            <person name="Sullivan S.A."/>
            <person name="Rosovitz M.J."/>
            <person name="Haft D.H."/>
            <person name="Selengut J."/>
            <person name="Ward N."/>
        </authorList>
    </citation>
    <scope>NUCLEOTIDE SEQUENCE [LARGE SCALE GENOMIC DNA]</scope>
    <source>
        <strain>ATCC 700808 / DSM 15171 / DSS-3</strain>
    </source>
</reference>
<reference key="2">
    <citation type="journal article" date="2014" name="Stand. Genomic Sci.">
        <title>An updated genome annotation for the model marine bacterium Ruegeria pomeroyi DSS-3.</title>
        <authorList>
            <person name="Rivers A.R."/>
            <person name="Smith C.B."/>
            <person name="Moran M.A."/>
        </authorList>
    </citation>
    <scope>GENOME REANNOTATION</scope>
    <source>
        <strain>ATCC 700808 / DSM 15171 / DSS-3</strain>
    </source>
</reference>
<protein>
    <recommendedName>
        <fullName evidence="1">Phenylalanine--tRNA ligase alpha subunit</fullName>
        <ecNumber evidence="1">6.1.1.20</ecNumber>
    </recommendedName>
    <alternativeName>
        <fullName evidence="1">Phenylalanyl-tRNA synthetase alpha subunit</fullName>
        <shortName evidence="1">PheRS</shortName>
    </alternativeName>
</protein>
<accession>Q5LMG9</accession>
<organism>
    <name type="scientific">Ruegeria pomeroyi (strain ATCC 700808 / DSM 15171 / DSS-3)</name>
    <name type="common">Silicibacter pomeroyi</name>
    <dbReference type="NCBI Taxonomy" id="246200"/>
    <lineage>
        <taxon>Bacteria</taxon>
        <taxon>Pseudomonadati</taxon>
        <taxon>Pseudomonadota</taxon>
        <taxon>Alphaproteobacteria</taxon>
        <taxon>Rhodobacterales</taxon>
        <taxon>Roseobacteraceae</taxon>
        <taxon>Ruegeria</taxon>
    </lineage>
</organism>
<sequence>MDDLKAKYLGQIAEAADEAAIEAIRLAAVGKKGEIALMMRELGKMTPEERQTAGPALNALKDEINSALAAKKAALADAALDERLRSEWLDVTLPARNRRQGTLHPISQAREELTAIFAEMGFSVAEGPRIDTDWYNFDALNIPGHHPARAEMDTFYMHRAEGDNRPPHVLRTHTSPVQIRSMEKMGAPLRVICPGGVYRADYDQTHTPMFHQVEGLALDRDISMANLKWTLEEFVKAFFEVDDVELRFRASHFPFTEPSAEVDIRCSWEGGQLKIGEGDDWLEILGSGMVHPKVIAAGGIDPDVYQGFAFGIGIDRLAMLKYGIPDLRAFFDSDLRWLRHYGFAALDMPNLHGGLSR</sequence>
<dbReference type="EC" id="6.1.1.20" evidence="1"/>
<dbReference type="EMBL" id="CP000031">
    <property type="protein sequence ID" value="AAV96819.1"/>
    <property type="molecule type" value="Genomic_DNA"/>
</dbReference>
<dbReference type="RefSeq" id="WP_011049274.1">
    <property type="nucleotide sequence ID" value="NC_003911.12"/>
</dbReference>
<dbReference type="SMR" id="Q5LMG9"/>
<dbReference type="STRING" id="246200.SPO3594"/>
<dbReference type="PaxDb" id="246200-SPO3594"/>
<dbReference type="KEGG" id="sil:SPO3594"/>
<dbReference type="eggNOG" id="COG0016">
    <property type="taxonomic scope" value="Bacteria"/>
</dbReference>
<dbReference type="HOGENOM" id="CLU_025086_0_1_5"/>
<dbReference type="OrthoDB" id="9800719at2"/>
<dbReference type="Proteomes" id="UP000001023">
    <property type="component" value="Chromosome"/>
</dbReference>
<dbReference type="GO" id="GO:0005737">
    <property type="term" value="C:cytoplasm"/>
    <property type="evidence" value="ECO:0007669"/>
    <property type="project" value="UniProtKB-SubCell"/>
</dbReference>
<dbReference type="GO" id="GO:0005524">
    <property type="term" value="F:ATP binding"/>
    <property type="evidence" value="ECO:0007669"/>
    <property type="project" value="UniProtKB-UniRule"/>
</dbReference>
<dbReference type="GO" id="GO:0000287">
    <property type="term" value="F:magnesium ion binding"/>
    <property type="evidence" value="ECO:0007669"/>
    <property type="project" value="UniProtKB-UniRule"/>
</dbReference>
<dbReference type="GO" id="GO:0004826">
    <property type="term" value="F:phenylalanine-tRNA ligase activity"/>
    <property type="evidence" value="ECO:0007669"/>
    <property type="project" value="UniProtKB-UniRule"/>
</dbReference>
<dbReference type="GO" id="GO:0000049">
    <property type="term" value="F:tRNA binding"/>
    <property type="evidence" value="ECO:0007669"/>
    <property type="project" value="InterPro"/>
</dbReference>
<dbReference type="GO" id="GO:0006432">
    <property type="term" value="P:phenylalanyl-tRNA aminoacylation"/>
    <property type="evidence" value="ECO:0007669"/>
    <property type="project" value="UniProtKB-UniRule"/>
</dbReference>
<dbReference type="CDD" id="cd00496">
    <property type="entry name" value="PheRS_alpha_core"/>
    <property type="match status" value="1"/>
</dbReference>
<dbReference type="FunFam" id="3.30.930.10:FF:000003">
    <property type="entry name" value="Phenylalanine--tRNA ligase alpha subunit"/>
    <property type="match status" value="1"/>
</dbReference>
<dbReference type="Gene3D" id="3.30.930.10">
    <property type="entry name" value="Bira Bifunctional Protein, Domain 2"/>
    <property type="match status" value="1"/>
</dbReference>
<dbReference type="HAMAP" id="MF_00281">
    <property type="entry name" value="Phe_tRNA_synth_alpha1"/>
    <property type="match status" value="1"/>
</dbReference>
<dbReference type="InterPro" id="IPR006195">
    <property type="entry name" value="aa-tRNA-synth_II"/>
</dbReference>
<dbReference type="InterPro" id="IPR045864">
    <property type="entry name" value="aa-tRNA-synth_II/BPL/LPL"/>
</dbReference>
<dbReference type="InterPro" id="IPR004529">
    <property type="entry name" value="Phe-tRNA-synth_IIc_asu"/>
</dbReference>
<dbReference type="InterPro" id="IPR004188">
    <property type="entry name" value="Phe-tRNA_ligase_II_N"/>
</dbReference>
<dbReference type="InterPro" id="IPR022911">
    <property type="entry name" value="Phe_tRNA_ligase_alpha1_bac"/>
</dbReference>
<dbReference type="InterPro" id="IPR002319">
    <property type="entry name" value="Phenylalanyl-tRNA_Synthase"/>
</dbReference>
<dbReference type="InterPro" id="IPR010978">
    <property type="entry name" value="tRNA-bd_arm"/>
</dbReference>
<dbReference type="NCBIfam" id="TIGR00468">
    <property type="entry name" value="pheS"/>
    <property type="match status" value="1"/>
</dbReference>
<dbReference type="PANTHER" id="PTHR11538:SF41">
    <property type="entry name" value="PHENYLALANINE--TRNA LIGASE, MITOCHONDRIAL"/>
    <property type="match status" value="1"/>
</dbReference>
<dbReference type="PANTHER" id="PTHR11538">
    <property type="entry name" value="PHENYLALANYL-TRNA SYNTHETASE"/>
    <property type="match status" value="1"/>
</dbReference>
<dbReference type="Pfam" id="PF02912">
    <property type="entry name" value="Phe_tRNA-synt_N"/>
    <property type="match status" value="1"/>
</dbReference>
<dbReference type="Pfam" id="PF01409">
    <property type="entry name" value="tRNA-synt_2d"/>
    <property type="match status" value="1"/>
</dbReference>
<dbReference type="SUPFAM" id="SSF55681">
    <property type="entry name" value="Class II aaRS and biotin synthetases"/>
    <property type="match status" value="1"/>
</dbReference>
<dbReference type="SUPFAM" id="SSF46589">
    <property type="entry name" value="tRNA-binding arm"/>
    <property type="match status" value="1"/>
</dbReference>
<dbReference type="PROSITE" id="PS50862">
    <property type="entry name" value="AA_TRNA_LIGASE_II"/>
    <property type="match status" value="1"/>
</dbReference>
<gene>
    <name evidence="1" type="primary">pheS</name>
    <name type="ordered locus">SPO3594</name>
</gene>
<keyword id="KW-0030">Aminoacyl-tRNA synthetase</keyword>
<keyword id="KW-0067">ATP-binding</keyword>
<keyword id="KW-0963">Cytoplasm</keyword>
<keyword id="KW-0436">Ligase</keyword>
<keyword id="KW-0460">Magnesium</keyword>
<keyword id="KW-0479">Metal-binding</keyword>
<keyword id="KW-0547">Nucleotide-binding</keyword>
<keyword id="KW-0648">Protein biosynthesis</keyword>
<keyword id="KW-1185">Reference proteome</keyword>
<feature type="chain" id="PRO_0000232026" description="Phenylalanine--tRNA ligase alpha subunit">
    <location>
        <begin position="1"/>
        <end position="357"/>
    </location>
</feature>
<feature type="binding site" evidence="1">
    <location>
        <position position="257"/>
    </location>
    <ligand>
        <name>Mg(2+)</name>
        <dbReference type="ChEBI" id="CHEBI:18420"/>
        <note>shared with beta subunit</note>
    </ligand>
</feature>
<proteinExistence type="inferred from homology"/>
<name>SYFA_RUEPO</name>
<comment type="catalytic activity">
    <reaction evidence="1">
        <text>tRNA(Phe) + L-phenylalanine + ATP = L-phenylalanyl-tRNA(Phe) + AMP + diphosphate + H(+)</text>
        <dbReference type="Rhea" id="RHEA:19413"/>
        <dbReference type="Rhea" id="RHEA-COMP:9668"/>
        <dbReference type="Rhea" id="RHEA-COMP:9699"/>
        <dbReference type="ChEBI" id="CHEBI:15378"/>
        <dbReference type="ChEBI" id="CHEBI:30616"/>
        <dbReference type="ChEBI" id="CHEBI:33019"/>
        <dbReference type="ChEBI" id="CHEBI:58095"/>
        <dbReference type="ChEBI" id="CHEBI:78442"/>
        <dbReference type="ChEBI" id="CHEBI:78531"/>
        <dbReference type="ChEBI" id="CHEBI:456215"/>
        <dbReference type="EC" id="6.1.1.20"/>
    </reaction>
</comment>
<comment type="cofactor">
    <cofactor evidence="1">
        <name>Mg(2+)</name>
        <dbReference type="ChEBI" id="CHEBI:18420"/>
    </cofactor>
    <text evidence="1">Binds 2 magnesium ions per tetramer.</text>
</comment>
<comment type="subunit">
    <text evidence="1">Tetramer of two alpha and two beta subunits.</text>
</comment>
<comment type="subcellular location">
    <subcellularLocation>
        <location evidence="1">Cytoplasm</location>
    </subcellularLocation>
</comment>
<comment type="similarity">
    <text evidence="1">Belongs to the class-II aminoacyl-tRNA synthetase family. Phe-tRNA synthetase alpha subunit type 1 subfamily.</text>
</comment>